<feature type="chain" id="PRO_0000279691" description="WD repeat-containing protein 82">
    <location>
        <begin position="1"/>
        <end position="313"/>
    </location>
</feature>
<feature type="repeat" description="WD 1">
    <location>
        <begin position="19"/>
        <end position="58"/>
    </location>
</feature>
<feature type="repeat" description="WD 2">
    <location>
        <begin position="105"/>
        <end position="144"/>
    </location>
</feature>
<feature type="repeat" description="WD 3">
    <location>
        <begin position="146"/>
        <end position="184"/>
    </location>
</feature>
<feature type="repeat" description="WD 4">
    <location>
        <begin position="192"/>
        <end position="231"/>
    </location>
</feature>
<feature type="repeat" description="WD 5">
    <location>
        <begin position="236"/>
        <end position="276"/>
    </location>
</feature>
<feature type="repeat" description="WD 6">
    <location>
        <begin position="280"/>
        <end position="313"/>
    </location>
</feature>
<comment type="function">
    <text evidence="1">Regulatory component of the SET1/COMPASS complex implicated in the tethering of this complex to transcriptional start sites of active genes. Facilitates histone H3 'Lys-4' methylation (H3K4me) via recruitment of the SETD1A or SETD1B to the 'Ser-5' phosphorylated C-terminal domain (CTD) of RNA polymerase II large subunit (POLR2A). Component of the PNUTS-PP1 protein phosphatase complex, a protein phosphatase 1 (PP1) complex that promotes RNA polymerase II transcription pause-release, allowing transcription elongation.</text>
</comment>
<comment type="subunit">
    <text evidence="1">Component of the SET1/COMPASS complex. Component of the PNUTS-PP1 phosphatase complex.</text>
</comment>
<comment type="subcellular location">
    <subcellularLocation>
        <location evidence="1">Nucleus</location>
    </subcellularLocation>
    <subcellularLocation>
        <location evidence="2">Chromosome</location>
    </subcellularLocation>
    <subcellularLocation>
        <location evidence="2">Cytoplasm</location>
    </subcellularLocation>
    <text evidence="2">Recruited at sites of high RNA polymerase II occupancy (By similarity).</text>
</comment>
<comment type="similarity">
    <text evidence="3">Belongs to the WD repeat SWD2 family.</text>
</comment>
<reference key="1">
    <citation type="submission" date="2006-10" db="EMBL/GenBank/DDBJ databases">
        <authorList>
            <consortium name="Sanger Xenopus tropicalis EST/cDNA project"/>
        </authorList>
    </citation>
    <scope>NUCLEOTIDE SEQUENCE [LARGE SCALE MRNA]</scope>
    <source>
        <tissue>Egg</tissue>
    </source>
</reference>
<reference key="2">
    <citation type="submission" date="2004-06" db="EMBL/GenBank/DDBJ databases">
        <authorList>
            <consortium name="NIH - Xenopus Gene Collection (XGC) project"/>
        </authorList>
    </citation>
    <scope>NUCLEOTIDE SEQUENCE [LARGE SCALE MRNA]</scope>
    <source>
        <tissue>Embryo</tissue>
    </source>
</reference>
<keyword id="KW-0158">Chromosome</keyword>
<keyword id="KW-0963">Cytoplasm</keyword>
<keyword id="KW-0539">Nucleus</keyword>
<keyword id="KW-1185">Reference proteome</keyword>
<keyword id="KW-0677">Repeat</keyword>
<keyword id="KW-0804">Transcription</keyword>
<keyword id="KW-0805">Transcription regulation</keyword>
<keyword id="KW-0806">Transcription termination</keyword>
<keyword id="KW-0853">WD repeat</keyword>
<dbReference type="EMBL" id="CR761982">
    <property type="protein sequence ID" value="CAJ81468.1"/>
    <property type="molecule type" value="mRNA"/>
</dbReference>
<dbReference type="EMBL" id="BC074675">
    <property type="protein sequence ID" value="AAH74675.1"/>
    <property type="molecule type" value="mRNA"/>
</dbReference>
<dbReference type="RefSeq" id="NP_001004854.1">
    <property type="nucleotide sequence ID" value="NM_001004854.1"/>
</dbReference>
<dbReference type="RefSeq" id="XP_012816262.1">
    <property type="nucleotide sequence ID" value="XM_012960808.3"/>
</dbReference>
<dbReference type="SMR" id="Q6GL39"/>
<dbReference type="FunCoup" id="Q6GL39">
    <property type="interactions" value="3758"/>
</dbReference>
<dbReference type="STRING" id="8364.ENSXETP00000000114"/>
<dbReference type="PaxDb" id="8364-ENSXETP00000006015"/>
<dbReference type="DNASU" id="448141"/>
<dbReference type="GeneID" id="448141"/>
<dbReference type="KEGG" id="xtr:448141"/>
<dbReference type="AGR" id="Xenbase:XB-GENE-1003225"/>
<dbReference type="CTD" id="80335"/>
<dbReference type="Xenbase" id="XB-GENE-1003225">
    <property type="gene designation" value="wdr82"/>
</dbReference>
<dbReference type="eggNOG" id="KOG1446">
    <property type="taxonomic scope" value="Eukaryota"/>
</dbReference>
<dbReference type="eggNOG" id="KOG1747">
    <property type="taxonomic scope" value="Eukaryota"/>
</dbReference>
<dbReference type="InParanoid" id="Q6GL39"/>
<dbReference type="OMA" id="HNEGYIR"/>
<dbReference type="OrthoDB" id="27537at2759"/>
<dbReference type="PhylomeDB" id="Q6GL39"/>
<dbReference type="Proteomes" id="UP000008143">
    <property type="component" value="Chromosome 4"/>
</dbReference>
<dbReference type="Bgee" id="ENSXETG00000002765">
    <property type="expression patterns" value="Expressed in brain and 14 other cell types or tissues"/>
</dbReference>
<dbReference type="ExpressionAtlas" id="Q6GL39">
    <property type="expression patterns" value="differential"/>
</dbReference>
<dbReference type="GO" id="GO:0005694">
    <property type="term" value="C:chromosome"/>
    <property type="evidence" value="ECO:0007669"/>
    <property type="project" value="UniProtKB-SubCell"/>
</dbReference>
<dbReference type="GO" id="GO:0005634">
    <property type="term" value="C:nucleus"/>
    <property type="evidence" value="ECO:0007669"/>
    <property type="project" value="UniProtKB-SubCell"/>
</dbReference>
<dbReference type="GO" id="GO:0072357">
    <property type="term" value="C:PTW/PP1 phosphatase complex"/>
    <property type="evidence" value="ECO:0000250"/>
    <property type="project" value="UniProtKB"/>
</dbReference>
<dbReference type="GO" id="GO:0006353">
    <property type="term" value="P:DNA-templated transcription termination"/>
    <property type="evidence" value="ECO:0007669"/>
    <property type="project" value="UniProtKB-KW"/>
</dbReference>
<dbReference type="GO" id="GO:0110064">
    <property type="term" value="P:lncRNA catabolic process"/>
    <property type="evidence" value="ECO:0000250"/>
    <property type="project" value="UniProtKB"/>
</dbReference>
<dbReference type="GO" id="GO:0032785">
    <property type="term" value="P:negative regulation of DNA-templated transcription, elongation"/>
    <property type="evidence" value="ECO:0000250"/>
    <property type="project" value="UniProtKB"/>
</dbReference>
<dbReference type="GO" id="GO:0140744">
    <property type="term" value="P:negative regulation of lncRNA transcription"/>
    <property type="evidence" value="ECO:0000250"/>
    <property type="project" value="UniProtKB"/>
</dbReference>
<dbReference type="GO" id="GO:0071027">
    <property type="term" value="P:nuclear RNA surveillance"/>
    <property type="evidence" value="ECO:0000250"/>
    <property type="project" value="UniProtKB"/>
</dbReference>
<dbReference type="GO" id="GO:0032968">
    <property type="term" value="P:positive regulation of transcription elongation by RNA polymerase II"/>
    <property type="evidence" value="ECO:0000250"/>
    <property type="project" value="UniProtKB"/>
</dbReference>
<dbReference type="GO" id="GO:0001111">
    <property type="term" value="P:RNA polymerase II promoter clearance"/>
    <property type="evidence" value="ECO:0000250"/>
    <property type="project" value="UniProtKB"/>
</dbReference>
<dbReference type="CDD" id="cd00200">
    <property type="entry name" value="WD40"/>
    <property type="match status" value="1"/>
</dbReference>
<dbReference type="FunFam" id="2.130.10.10:FF:000065">
    <property type="entry name" value="WD repeat-containing protein 82"/>
    <property type="match status" value="1"/>
</dbReference>
<dbReference type="Gene3D" id="2.130.10.10">
    <property type="entry name" value="YVTN repeat-like/Quinoprotein amine dehydrogenase"/>
    <property type="match status" value="1"/>
</dbReference>
<dbReference type="InterPro" id="IPR020472">
    <property type="entry name" value="G-protein_beta_WD-40_rep"/>
</dbReference>
<dbReference type="InterPro" id="IPR037867">
    <property type="entry name" value="Swd2/WDR82"/>
</dbReference>
<dbReference type="InterPro" id="IPR015943">
    <property type="entry name" value="WD40/YVTN_repeat-like_dom_sf"/>
</dbReference>
<dbReference type="InterPro" id="IPR036322">
    <property type="entry name" value="WD40_repeat_dom_sf"/>
</dbReference>
<dbReference type="InterPro" id="IPR001680">
    <property type="entry name" value="WD40_rpt"/>
</dbReference>
<dbReference type="PANTHER" id="PTHR19861:SF0">
    <property type="entry name" value="WD REPEAT-CONTAINING PROTEIN 82"/>
    <property type="match status" value="1"/>
</dbReference>
<dbReference type="PANTHER" id="PTHR19861">
    <property type="entry name" value="WD40 REPEAT PROTEIN SWD2"/>
    <property type="match status" value="1"/>
</dbReference>
<dbReference type="Pfam" id="PF00400">
    <property type="entry name" value="WD40"/>
    <property type="match status" value="3"/>
</dbReference>
<dbReference type="PRINTS" id="PR00320">
    <property type="entry name" value="GPROTEINBRPT"/>
</dbReference>
<dbReference type="SMART" id="SM00320">
    <property type="entry name" value="WD40"/>
    <property type="match status" value="6"/>
</dbReference>
<dbReference type="SUPFAM" id="SSF50978">
    <property type="entry name" value="WD40 repeat-like"/>
    <property type="match status" value="1"/>
</dbReference>
<dbReference type="PROSITE" id="PS00678">
    <property type="entry name" value="WD_REPEATS_1"/>
    <property type="match status" value="1"/>
</dbReference>
<dbReference type="PROSITE" id="PS50082">
    <property type="entry name" value="WD_REPEATS_2"/>
    <property type="match status" value="3"/>
</dbReference>
<dbReference type="PROSITE" id="PS50294">
    <property type="entry name" value="WD_REPEATS_REGION"/>
    <property type="match status" value="1"/>
</dbReference>
<organism>
    <name type="scientific">Xenopus tropicalis</name>
    <name type="common">Western clawed frog</name>
    <name type="synonym">Silurana tropicalis</name>
    <dbReference type="NCBI Taxonomy" id="8364"/>
    <lineage>
        <taxon>Eukaryota</taxon>
        <taxon>Metazoa</taxon>
        <taxon>Chordata</taxon>
        <taxon>Craniata</taxon>
        <taxon>Vertebrata</taxon>
        <taxon>Euteleostomi</taxon>
        <taxon>Amphibia</taxon>
        <taxon>Batrachia</taxon>
        <taxon>Anura</taxon>
        <taxon>Pipoidea</taxon>
        <taxon>Pipidae</taxon>
        <taxon>Xenopodinae</taxon>
        <taxon>Xenopus</taxon>
        <taxon>Silurana</taxon>
    </lineage>
</organism>
<accession>Q6GL39</accession>
<proteinExistence type="evidence at transcript level"/>
<evidence type="ECO:0000250" key="1">
    <source>
        <dbReference type="UniProtKB" id="Q6UXN9"/>
    </source>
</evidence>
<evidence type="ECO:0000250" key="2">
    <source>
        <dbReference type="UniProtKB" id="Q8BFQ4"/>
    </source>
</evidence>
<evidence type="ECO:0000305" key="3"/>
<gene>
    <name type="primary">wdr82</name>
    <name type="ORF">TEgg072c23.1</name>
</gene>
<protein>
    <recommendedName>
        <fullName evidence="3">WD repeat-containing protein 82</fullName>
    </recommendedName>
</protein>
<name>WDR82_XENTR</name>
<sequence length="313" mass="35204">MKLTDNVLRSFRVAKVFRENSDKINCFDFSPTGETVISSSDDDSIVLYDCQEGKPKRTLYSKKYGVDLIRYTHAANTVVYSSNKIDDTIRYLSLHDNKYIRYFPGHSKRVVALSMSPVDDTFISGSLDKTIRLWDLRSPNCQGLMHLQGKPVCSFDPEGLIFAAGVNSEMVKLYDLRSFDKGPFATFKMQYDRTCEWTALKFSNDGKLILMSTNGGFLRLVDAFKGAVMHTFGGYNNSKAVTLEATFTPDSQFIMIGSEDGKIHVWNCESGMKVAVLDGKHTGPITCLQFNPKFMTFTSACSNMAFWLPTIDD</sequence>